<accession>Q06AV1</accession>
<gene>
    <name type="primary">NNMT</name>
</gene>
<evidence type="ECO:0000250" key="1"/>
<evidence type="ECO:0000250" key="2">
    <source>
        <dbReference type="UniProtKB" id="O55239"/>
    </source>
</evidence>
<evidence type="ECO:0000250" key="3">
    <source>
        <dbReference type="UniProtKB" id="P40261"/>
    </source>
</evidence>
<evidence type="ECO:0000305" key="4"/>
<keyword id="KW-0164">Citrullination</keyword>
<keyword id="KW-0963">Cytoplasm</keyword>
<keyword id="KW-0489">Methyltransferase</keyword>
<keyword id="KW-1185">Reference proteome</keyword>
<keyword id="KW-0949">S-adenosyl-L-methionine</keyword>
<keyword id="KW-0808">Transferase</keyword>
<sequence>MESGFTSKDAYLSHFNPQDYLEKYYNFGAKHSAEDQILRHLLKILFKIFCLDGVKGDLLIDIGSGPTIYQLLSACESFKEIIATDYTDQNLQELEKWLKKEPGAFDWSPVVTYVCELEGNRVKGTEKEEKLRRAVKRVLKCDVTQSWPLGAVPLPPADCLLSTLCLHAACPDLPTYRTALGNLRSLLKPGGFLVLVDALKSSYYMIGEQRFSSLCLGQEAVEAAVREAGYTIEHFEVISQSYSSTMANNEGLFSLVGRKLSPCV</sequence>
<comment type="function">
    <text evidence="2 3">Catalyzes the N-methylation of nicotinamide using the universal methyl donor S-adenosyl-L-methionine to form N1-methylnicotinamide and S-adenosyl-L-homocysteine, a predominant nicotinamide/vitamin B3 clearance pathway (By similarity). Plays a central role in regulating cellular methylation potential, by consuming S-adenosyl-L-methionine and limiting its availability for other methyltransferases (By similarity). Actively mediates genome-wide epigenetic and transcriptional changes through hypomethylation of repressive chromatin marks, such as H3K27me3 (By similarity). In a developmental context, contributes to low levels of the repressive histone marks that characterize pluripotent embryonic stem cell pre-implantation state (By similarity). Acts as a metabolic regulator primarily on white adipose tissue energy expenditure as well as hepatic gluconeogenesis and cholesterol biosynthesis (By similarity). In white adipocytes, regulates polyamine flux by consuming S-adenosyl-L-methionine which provides for propylamine group in polyamine biosynthesis, whereas by consuming nicotinamide controls NAD(+) levels through the salvage pathway (By similarity). Via its product N1-methylnicotinamide regulates protein acetylation in hepatocytes, by repressing the ubiquitination and increasing the stability of SIRT1 deacetylase (By similarity). Can also N-methylate other pyridines structurally related to nicotinamide and play a role in xenobiotic detoxification (By similarity).</text>
</comment>
<comment type="catalytic activity">
    <reaction evidence="2 3">
        <text>nicotinamide + S-adenosyl-L-methionine = 1-methylnicotinamide + S-adenosyl-L-homocysteine</text>
        <dbReference type="Rhea" id="RHEA:23884"/>
        <dbReference type="ChEBI" id="CHEBI:16797"/>
        <dbReference type="ChEBI" id="CHEBI:17154"/>
        <dbReference type="ChEBI" id="CHEBI:57856"/>
        <dbReference type="ChEBI" id="CHEBI:59789"/>
        <dbReference type="EC" id="2.1.1.1"/>
    </reaction>
    <physiologicalReaction direction="left-to-right" evidence="2 3">
        <dbReference type="Rhea" id="RHEA:23885"/>
    </physiologicalReaction>
</comment>
<comment type="pathway">
    <text evidence="3">Cofactor metabolism.</text>
</comment>
<comment type="pathway">
    <text evidence="3">Amino-acid degradation.</text>
</comment>
<comment type="subunit">
    <text evidence="3">Monomer.</text>
</comment>
<comment type="subcellular location">
    <subcellularLocation>
        <location evidence="1">Cytoplasm</location>
    </subcellularLocation>
</comment>
<comment type="PTM">
    <text evidence="3">Deiminated by PADI1 and PADI2.</text>
</comment>
<comment type="similarity">
    <text evidence="4">Belongs to the class I-like SAM-binding methyltransferase superfamily. NNMT/PNMT/TEMT family.</text>
</comment>
<name>NNMT_PIG</name>
<organism>
    <name type="scientific">Sus scrofa</name>
    <name type="common">Pig</name>
    <dbReference type="NCBI Taxonomy" id="9823"/>
    <lineage>
        <taxon>Eukaryota</taxon>
        <taxon>Metazoa</taxon>
        <taxon>Chordata</taxon>
        <taxon>Craniata</taxon>
        <taxon>Vertebrata</taxon>
        <taxon>Euteleostomi</taxon>
        <taxon>Mammalia</taxon>
        <taxon>Eutheria</taxon>
        <taxon>Laurasiatheria</taxon>
        <taxon>Artiodactyla</taxon>
        <taxon>Suina</taxon>
        <taxon>Suidae</taxon>
        <taxon>Sus</taxon>
    </lineage>
</organism>
<protein>
    <recommendedName>
        <fullName>Nicotinamide N-methyltransferase</fullName>
        <ecNumber evidence="2 3">2.1.1.1</ecNumber>
    </recommendedName>
</protein>
<feature type="chain" id="PRO_0000262881" description="Nicotinamide N-methyltransferase">
    <location>
        <begin position="1"/>
        <end position="264"/>
    </location>
</feature>
<feature type="binding site" evidence="3">
    <location>
        <position position="20"/>
    </location>
    <ligand>
        <name>S-adenosyl-L-methionine</name>
        <dbReference type="ChEBI" id="CHEBI:59789"/>
    </ligand>
</feature>
<feature type="binding site" evidence="3">
    <location>
        <position position="25"/>
    </location>
    <ligand>
        <name>S-adenosyl-L-methionine</name>
        <dbReference type="ChEBI" id="CHEBI:59789"/>
    </ligand>
</feature>
<feature type="binding site" evidence="3">
    <location>
        <position position="63"/>
    </location>
    <ligand>
        <name>S-adenosyl-L-methionine</name>
        <dbReference type="ChEBI" id="CHEBI:59789"/>
    </ligand>
</feature>
<feature type="binding site" evidence="3">
    <location>
        <position position="69"/>
    </location>
    <ligand>
        <name>S-adenosyl-L-methionine</name>
        <dbReference type="ChEBI" id="CHEBI:59789"/>
    </ligand>
</feature>
<feature type="binding site" evidence="3">
    <location>
        <position position="85"/>
    </location>
    <ligand>
        <name>S-adenosyl-L-methionine</name>
        <dbReference type="ChEBI" id="CHEBI:59789"/>
    </ligand>
</feature>
<feature type="binding site" evidence="3">
    <location>
        <position position="90"/>
    </location>
    <ligand>
        <name>S-adenosyl-L-methionine</name>
        <dbReference type="ChEBI" id="CHEBI:59789"/>
    </ligand>
</feature>
<feature type="binding site" evidence="3">
    <location>
        <begin position="142"/>
        <end position="143"/>
    </location>
    <ligand>
        <name>S-adenosyl-L-methionine</name>
        <dbReference type="ChEBI" id="CHEBI:59789"/>
    </ligand>
</feature>
<feature type="binding site" evidence="3">
    <location>
        <position position="163"/>
    </location>
    <ligand>
        <name>S-adenosyl-L-methionine</name>
        <dbReference type="ChEBI" id="CHEBI:59789"/>
    </ligand>
</feature>
<feature type="binding site" evidence="3">
    <location>
        <position position="197"/>
    </location>
    <ligand>
        <name>nicotinamide</name>
        <dbReference type="ChEBI" id="CHEBI:17154"/>
    </ligand>
</feature>
<feature type="binding site" evidence="3">
    <location>
        <position position="213"/>
    </location>
    <ligand>
        <name>nicotinamide</name>
        <dbReference type="ChEBI" id="CHEBI:17154"/>
    </ligand>
</feature>
<feature type="modified residue" description="Citrulline; alternate" evidence="3">
    <location>
        <position position="132"/>
    </location>
</feature>
<reference key="1">
    <citation type="submission" date="2006-08" db="EMBL/GenBank/DDBJ databases">
        <authorList>
            <person name="Liu G.Y."/>
        </authorList>
    </citation>
    <scope>NUCLEOTIDE SEQUENCE [LARGE SCALE MRNA]</scope>
</reference>
<dbReference type="EC" id="2.1.1.1" evidence="2 3"/>
<dbReference type="EMBL" id="DQ917624">
    <property type="protein sequence ID" value="ABI97169.1"/>
    <property type="molecule type" value="mRNA"/>
</dbReference>
<dbReference type="RefSeq" id="NP_001116618.1">
    <property type="nucleotide sequence ID" value="NM_001123146.1"/>
</dbReference>
<dbReference type="SMR" id="Q06AV1"/>
<dbReference type="FunCoup" id="Q06AV1">
    <property type="interactions" value="44"/>
</dbReference>
<dbReference type="STRING" id="9823.ENSSSCP00000015979"/>
<dbReference type="PaxDb" id="9823-ENSSSCP00000015979"/>
<dbReference type="PeptideAtlas" id="Q06AV1"/>
<dbReference type="Ensembl" id="ENSSSCT00055020637.1">
    <property type="protein sequence ID" value="ENSSSCP00055016316.1"/>
    <property type="gene ID" value="ENSSSCG00055010549.1"/>
</dbReference>
<dbReference type="Ensembl" id="ENSSSCT00065048879.1">
    <property type="protein sequence ID" value="ENSSSCP00065021128.1"/>
    <property type="gene ID" value="ENSSSCG00065035867.1"/>
</dbReference>
<dbReference type="GeneID" id="100144485"/>
<dbReference type="KEGG" id="ssc:100144485"/>
<dbReference type="CTD" id="4837"/>
<dbReference type="eggNOG" id="KOG4564">
    <property type="taxonomic scope" value="Eukaryota"/>
</dbReference>
<dbReference type="HOGENOM" id="CLU_141713_1_0_1"/>
<dbReference type="InParanoid" id="Q06AV1"/>
<dbReference type="OrthoDB" id="10050085at2759"/>
<dbReference type="Proteomes" id="UP000008227">
    <property type="component" value="Unplaced"/>
</dbReference>
<dbReference type="Proteomes" id="UP000314985">
    <property type="component" value="Unplaced"/>
</dbReference>
<dbReference type="Proteomes" id="UP000694570">
    <property type="component" value="Unplaced"/>
</dbReference>
<dbReference type="Proteomes" id="UP000694571">
    <property type="component" value="Unplaced"/>
</dbReference>
<dbReference type="Proteomes" id="UP000694720">
    <property type="component" value="Unplaced"/>
</dbReference>
<dbReference type="Proteomes" id="UP000694722">
    <property type="component" value="Unplaced"/>
</dbReference>
<dbReference type="Proteomes" id="UP000694723">
    <property type="component" value="Unplaced"/>
</dbReference>
<dbReference type="Proteomes" id="UP000694724">
    <property type="component" value="Unplaced"/>
</dbReference>
<dbReference type="Proteomes" id="UP000694725">
    <property type="component" value="Unplaced"/>
</dbReference>
<dbReference type="Proteomes" id="UP000694726">
    <property type="component" value="Unplaced"/>
</dbReference>
<dbReference type="Proteomes" id="UP000694727">
    <property type="component" value="Unplaced"/>
</dbReference>
<dbReference type="Proteomes" id="UP000694728">
    <property type="component" value="Unplaced"/>
</dbReference>
<dbReference type="GO" id="GO:0005829">
    <property type="term" value="C:cytosol"/>
    <property type="evidence" value="ECO:0000318"/>
    <property type="project" value="GO_Central"/>
</dbReference>
<dbReference type="GO" id="GO:0008112">
    <property type="term" value="F:nicotinamide N-methyltransferase activity"/>
    <property type="evidence" value="ECO:0000250"/>
    <property type="project" value="UniProtKB"/>
</dbReference>
<dbReference type="GO" id="GO:0032259">
    <property type="term" value="P:methylation"/>
    <property type="evidence" value="ECO:0007669"/>
    <property type="project" value="UniProtKB-KW"/>
</dbReference>
<dbReference type="GO" id="GO:0006769">
    <property type="term" value="P:nicotinamide metabolic process"/>
    <property type="evidence" value="ECO:0000250"/>
    <property type="project" value="UniProtKB"/>
</dbReference>
<dbReference type="GO" id="GO:0045722">
    <property type="term" value="P:positive regulation of gluconeogenesis"/>
    <property type="evidence" value="ECO:0000250"/>
    <property type="project" value="UniProtKB"/>
</dbReference>
<dbReference type="GO" id="GO:0090312">
    <property type="term" value="P:positive regulation of protein deacetylation"/>
    <property type="evidence" value="ECO:0000250"/>
    <property type="project" value="UniProtKB"/>
</dbReference>
<dbReference type="CDD" id="cd02440">
    <property type="entry name" value="AdoMet_MTases"/>
    <property type="match status" value="1"/>
</dbReference>
<dbReference type="FunFam" id="3.40.50.150:FF:000065">
    <property type="entry name" value="Phenylethanolamine N-methyltransferase"/>
    <property type="match status" value="1"/>
</dbReference>
<dbReference type="Gene3D" id="3.40.50.150">
    <property type="entry name" value="Vaccinia Virus protein VP39"/>
    <property type="match status" value="1"/>
</dbReference>
<dbReference type="InterPro" id="IPR025820">
    <property type="entry name" value="NNMT/PNMT/TEMT_CS"/>
</dbReference>
<dbReference type="InterPro" id="IPR000940">
    <property type="entry name" value="NNMT_TEMT_trans"/>
</dbReference>
<dbReference type="InterPro" id="IPR053384">
    <property type="entry name" value="SAM-dep_methyltransferase"/>
</dbReference>
<dbReference type="InterPro" id="IPR029063">
    <property type="entry name" value="SAM-dependent_MTases_sf"/>
</dbReference>
<dbReference type="NCBIfam" id="NF041360">
    <property type="entry name" value="GntF_guanitoxin"/>
    <property type="match status" value="1"/>
</dbReference>
<dbReference type="PANTHER" id="PTHR10867:SF32">
    <property type="entry name" value="NICOTINAMIDE N-METHYLTRANSFERASE"/>
    <property type="match status" value="1"/>
</dbReference>
<dbReference type="PANTHER" id="PTHR10867">
    <property type="entry name" value="NNMT/PNMT/TEMT FAMILY MEMBER"/>
    <property type="match status" value="1"/>
</dbReference>
<dbReference type="Pfam" id="PF01234">
    <property type="entry name" value="NNMT_PNMT_TEMT"/>
    <property type="match status" value="1"/>
</dbReference>
<dbReference type="PIRSF" id="PIRSF000384">
    <property type="entry name" value="PNMTase"/>
    <property type="match status" value="1"/>
</dbReference>
<dbReference type="SUPFAM" id="SSF53335">
    <property type="entry name" value="S-adenosyl-L-methionine-dependent methyltransferases"/>
    <property type="match status" value="1"/>
</dbReference>
<dbReference type="PROSITE" id="PS01100">
    <property type="entry name" value="NNMT_PNMT_TEMT"/>
    <property type="match status" value="1"/>
</dbReference>
<dbReference type="PROSITE" id="PS51681">
    <property type="entry name" value="SAM_MT_NNMT_PNMT_TEMT"/>
    <property type="match status" value="1"/>
</dbReference>
<proteinExistence type="evidence at transcript level"/>